<reference key="1">
    <citation type="submission" date="2009-06" db="EMBL/GenBank/DDBJ databases">
        <title>Complete sequence of chromosome of Geopacillus sp. WCH70.</title>
        <authorList>
            <consortium name="US DOE Joint Genome Institute"/>
            <person name="Lucas S."/>
            <person name="Copeland A."/>
            <person name="Lapidus A."/>
            <person name="Glavina del Rio T."/>
            <person name="Dalin E."/>
            <person name="Tice H."/>
            <person name="Bruce D."/>
            <person name="Goodwin L."/>
            <person name="Pitluck S."/>
            <person name="Chertkov O."/>
            <person name="Brettin T."/>
            <person name="Detter J.C."/>
            <person name="Han C."/>
            <person name="Larimer F."/>
            <person name="Land M."/>
            <person name="Hauser L."/>
            <person name="Kyrpides N."/>
            <person name="Mikhailova N."/>
            <person name="Brumm P."/>
            <person name="Mead D.A."/>
            <person name="Richardson P."/>
        </authorList>
    </citation>
    <scope>NUCLEOTIDE SEQUENCE [LARGE SCALE GENOMIC DNA]</scope>
    <source>
        <strain>WCH70</strain>
    </source>
</reference>
<sequence length="340" mass="37895">METMLFSPYTIRGVTIKNRIVMSPMCMYSCDTEDGKVRNWHKIHYPTRAVGQVGLIIVEATAVAAQGRISSRDLGIWSDEHVDGLRELASLVKEHGAKIGIQLAHAGRKSEVDGEIIAPSAIPFSEKTRTPKEMTKADIEETIQAFQNGARRAKEAGFDIIEIHGAHGYLINEFLSPLSNRRQDEYGGSPENRYRFLGEIIDAVREVWDGPLFVRISASDYHPEGLTVKDYVPYAKRMKEQGVDLIDVSSGAVVPAKIRVYPGYQVPFAETIRREANIATGAVGLITSGLQAEEILRNGRADLVFLARELLRNPYWPYAAAKELGTTISASVQYERGWRF</sequence>
<dbReference type="EC" id="1.6.99.1" evidence="1"/>
<dbReference type="EMBL" id="CP001638">
    <property type="protein sequence ID" value="ACS24983.1"/>
    <property type="molecule type" value="Genomic_DNA"/>
</dbReference>
<dbReference type="SMR" id="C5D427"/>
<dbReference type="STRING" id="471223.GWCH70_2275"/>
<dbReference type="KEGG" id="gwc:GWCH70_2275"/>
<dbReference type="eggNOG" id="COG1902">
    <property type="taxonomic scope" value="Bacteria"/>
</dbReference>
<dbReference type="HOGENOM" id="CLU_012153_2_1_9"/>
<dbReference type="OrthoDB" id="9772736at2"/>
<dbReference type="GO" id="GO:0010181">
    <property type="term" value="F:FMN binding"/>
    <property type="evidence" value="ECO:0007669"/>
    <property type="project" value="UniProtKB-UniRule"/>
</dbReference>
<dbReference type="GO" id="GO:0050661">
    <property type="term" value="F:NADP binding"/>
    <property type="evidence" value="ECO:0007669"/>
    <property type="project" value="UniProtKB-UniRule"/>
</dbReference>
<dbReference type="GO" id="GO:0003959">
    <property type="term" value="F:NADPH dehydrogenase activity"/>
    <property type="evidence" value="ECO:0007669"/>
    <property type="project" value="UniProtKB-UniRule"/>
</dbReference>
<dbReference type="GO" id="GO:0009636">
    <property type="term" value="P:response to toxic substance"/>
    <property type="evidence" value="ECO:0007669"/>
    <property type="project" value="UniProtKB-KW"/>
</dbReference>
<dbReference type="CDD" id="cd02932">
    <property type="entry name" value="OYE_YqiM_FMN"/>
    <property type="match status" value="1"/>
</dbReference>
<dbReference type="Gene3D" id="3.20.20.70">
    <property type="entry name" value="Aldolase class I"/>
    <property type="match status" value="1"/>
</dbReference>
<dbReference type="HAMAP" id="MF_01614">
    <property type="entry name" value="NamA"/>
    <property type="match status" value="1"/>
</dbReference>
<dbReference type="InterPro" id="IPR013785">
    <property type="entry name" value="Aldolase_TIM"/>
</dbReference>
<dbReference type="InterPro" id="IPR023663">
    <property type="entry name" value="NADPH_DH_bac"/>
</dbReference>
<dbReference type="InterPro" id="IPR001155">
    <property type="entry name" value="OxRdtase_FMN_N"/>
</dbReference>
<dbReference type="InterPro" id="IPR044152">
    <property type="entry name" value="YqjM-like"/>
</dbReference>
<dbReference type="NCBIfam" id="NF010047">
    <property type="entry name" value="PRK13523.1"/>
    <property type="match status" value="1"/>
</dbReference>
<dbReference type="PANTHER" id="PTHR43303">
    <property type="entry name" value="NADPH DEHYDROGENASE C23G7.10C-RELATED"/>
    <property type="match status" value="1"/>
</dbReference>
<dbReference type="PANTHER" id="PTHR43303:SF4">
    <property type="entry name" value="NADPH DEHYDROGENASE C23G7.10C-RELATED"/>
    <property type="match status" value="1"/>
</dbReference>
<dbReference type="Pfam" id="PF00724">
    <property type="entry name" value="Oxidored_FMN"/>
    <property type="match status" value="1"/>
</dbReference>
<dbReference type="SUPFAM" id="SSF51395">
    <property type="entry name" value="FMN-linked oxidoreductases"/>
    <property type="match status" value="1"/>
</dbReference>
<proteinExistence type="inferred from homology"/>
<name>NAMA_GEOSW</name>
<accession>C5D427</accession>
<protein>
    <recommendedName>
        <fullName evidence="1">NADPH dehydrogenase</fullName>
        <ecNumber evidence="1">1.6.99.1</ecNumber>
    </recommendedName>
</protein>
<organism>
    <name type="scientific">Geobacillus sp. (strain WCH70)</name>
    <dbReference type="NCBI Taxonomy" id="471223"/>
    <lineage>
        <taxon>Bacteria</taxon>
        <taxon>Bacillati</taxon>
        <taxon>Bacillota</taxon>
        <taxon>Bacilli</taxon>
        <taxon>Bacillales</taxon>
        <taxon>Anoxybacillaceae</taxon>
        <taxon>Geobacillus</taxon>
    </lineage>
</organism>
<feature type="chain" id="PRO_1000215711" description="NADPH dehydrogenase">
    <location>
        <begin position="1"/>
        <end position="340"/>
    </location>
</feature>
<feature type="binding site" evidence="1">
    <location>
        <begin position="23"/>
        <end position="26"/>
    </location>
    <ligand>
        <name>FMN</name>
        <dbReference type="ChEBI" id="CHEBI:58210"/>
    </ligand>
</feature>
<feature type="binding site" evidence="1">
    <location>
        <position position="28"/>
    </location>
    <ligand>
        <name>substrate</name>
    </ligand>
</feature>
<feature type="binding site" evidence="1">
    <location>
        <position position="60"/>
    </location>
    <ligand>
        <name>FMN</name>
        <dbReference type="ChEBI" id="CHEBI:58210"/>
    </ligand>
</feature>
<feature type="binding site" evidence="1">
    <location>
        <position position="102"/>
    </location>
    <ligand>
        <name>FMN</name>
        <dbReference type="ChEBI" id="CHEBI:58210"/>
    </ligand>
</feature>
<feature type="binding site" evidence="1">
    <location>
        <begin position="164"/>
        <end position="167"/>
    </location>
    <ligand>
        <name>substrate</name>
    </ligand>
</feature>
<feature type="binding site" evidence="1">
    <location>
        <position position="215"/>
    </location>
    <ligand>
        <name>FMN</name>
        <dbReference type="ChEBI" id="CHEBI:58210"/>
    </ligand>
</feature>
<feature type="binding site" evidence="1">
    <location>
        <begin position="307"/>
        <end position="308"/>
    </location>
    <ligand>
        <name>FMN</name>
        <dbReference type="ChEBI" id="CHEBI:58210"/>
    </ligand>
</feature>
<gene>
    <name evidence="1" type="primary">namA</name>
    <name type="ordered locus">GWCH70_2275</name>
</gene>
<evidence type="ECO:0000255" key="1">
    <source>
        <dbReference type="HAMAP-Rule" id="MF_01614"/>
    </source>
</evidence>
<comment type="function">
    <text evidence="1">Catalyzes the reduction of the double bond of an array of alpha,beta-unsaturated aldehydes and ketones. It also reduces the nitro group of nitroester and nitroaromatic compounds. It could have a role in detoxification processes.</text>
</comment>
<comment type="catalytic activity">
    <reaction evidence="1">
        <text>A + NADPH + H(+) = AH2 + NADP(+)</text>
        <dbReference type="Rhea" id="RHEA:13149"/>
        <dbReference type="ChEBI" id="CHEBI:13193"/>
        <dbReference type="ChEBI" id="CHEBI:15378"/>
        <dbReference type="ChEBI" id="CHEBI:17499"/>
        <dbReference type="ChEBI" id="CHEBI:57783"/>
        <dbReference type="ChEBI" id="CHEBI:58349"/>
        <dbReference type="EC" id="1.6.99.1"/>
    </reaction>
</comment>
<comment type="cofactor">
    <cofactor evidence="1">
        <name>FMN</name>
        <dbReference type="ChEBI" id="CHEBI:58210"/>
    </cofactor>
</comment>
<comment type="subunit">
    <text evidence="1">Homotetramer.</text>
</comment>
<comment type="similarity">
    <text evidence="1">Belongs to the NADH:flavin oxidoreductase/NADH oxidase family. NamA subfamily.</text>
</comment>
<keyword id="KW-0216">Detoxification</keyword>
<keyword id="KW-0285">Flavoprotein</keyword>
<keyword id="KW-0288">FMN</keyword>
<keyword id="KW-0521">NADP</keyword>
<keyword id="KW-0560">Oxidoreductase</keyword>